<accession>A6NLU0</accession>
<gene>
    <name type="primary">RFPL4A</name>
    <name type="synonym">RFPL4</name>
    <name type="synonym">RNF210</name>
</gene>
<evidence type="ECO:0000250" key="1">
    <source>
        <dbReference type="UniProtKB" id="Q8VH31"/>
    </source>
</evidence>
<evidence type="ECO:0000255" key="2">
    <source>
        <dbReference type="PROSITE-ProRule" id="PRU00175"/>
    </source>
</evidence>
<evidence type="ECO:0000255" key="3">
    <source>
        <dbReference type="PROSITE-ProRule" id="PRU00548"/>
    </source>
</evidence>
<evidence type="ECO:0007829" key="4">
    <source>
        <dbReference type="PDB" id="2FBE"/>
    </source>
</evidence>
<dbReference type="EMBL" id="AC008749">
    <property type="status" value="NOT_ANNOTATED_CDS"/>
    <property type="molecule type" value="Genomic_DNA"/>
</dbReference>
<dbReference type="CCDS" id="CCDS46201.1"/>
<dbReference type="RefSeq" id="NP_001138486.1">
    <property type="nucleotide sequence ID" value="NM_001145014.2"/>
</dbReference>
<dbReference type="PDB" id="2FBE">
    <property type="method" value="X-ray"/>
    <property type="resolution" value="2.52 A"/>
    <property type="chains" value="A/B/C/D=94-287"/>
</dbReference>
<dbReference type="PDBsum" id="2FBE"/>
<dbReference type="SMR" id="A6NLU0"/>
<dbReference type="BioGRID" id="131211">
    <property type="interactions" value="4"/>
</dbReference>
<dbReference type="FunCoup" id="A6NLU0">
    <property type="interactions" value="61"/>
</dbReference>
<dbReference type="IntAct" id="A6NLU0">
    <property type="interactions" value="3"/>
</dbReference>
<dbReference type="STRING" id="9606.ENSP00000392936"/>
<dbReference type="iPTMnet" id="A6NLU0"/>
<dbReference type="PhosphoSitePlus" id="A6NLU0"/>
<dbReference type="BioMuta" id="RFPL4A"/>
<dbReference type="MassIVE" id="A6NLU0"/>
<dbReference type="PaxDb" id="9606-ENSP00000392936"/>
<dbReference type="PeptideAtlas" id="A6NLU0"/>
<dbReference type="ProteomicsDB" id="1492"/>
<dbReference type="Pumba" id="A6NLU0"/>
<dbReference type="Antibodypedia" id="52665">
    <property type="antibodies" value="82 antibodies from 18 providers"/>
</dbReference>
<dbReference type="DNASU" id="342931"/>
<dbReference type="Ensembl" id="ENST00000434937.3">
    <property type="protein sequence ID" value="ENSP00000392936.2"/>
    <property type="gene ID" value="ENSG00000223638.4"/>
</dbReference>
<dbReference type="GeneID" id="342931"/>
<dbReference type="KEGG" id="hsa:342931"/>
<dbReference type="MANE-Select" id="ENST00000434937.3">
    <property type="protein sequence ID" value="ENSP00000392936.2"/>
    <property type="RefSeq nucleotide sequence ID" value="NM_001145014.2"/>
    <property type="RefSeq protein sequence ID" value="NP_001138486.1"/>
</dbReference>
<dbReference type="UCSC" id="uc010yge.3">
    <property type="organism name" value="human"/>
</dbReference>
<dbReference type="AGR" id="HGNC:16449"/>
<dbReference type="CTD" id="342931"/>
<dbReference type="DisGeNET" id="342931"/>
<dbReference type="GeneCards" id="RFPL4A"/>
<dbReference type="HGNC" id="HGNC:16449">
    <property type="gene designation" value="RFPL4A"/>
</dbReference>
<dbReference type="HPA" id="ENSG00000223638">
    <property type="expression patterns" value="Tissue enhanced (epididymis, liver, testis)"/>
</dbReference>
<dbReference type="MIM" id="612601">
    <property type="type" value="gene"/>
</dbReference>
<dbReference type="neXtProt" id="NX_A6NLU0"/>
<dbReference type="OpenTargets" id="ENSG00000223638"/>
<dbReference type="PharmGKB" id="PA162401186"/>
<dbReference type="VEuPathDB" id="HostDB:ENSG00000223638"/>
<dbReference type="eggNOG" id="KOG2177">
    <property type="taxonomic scope" value="Eukaryota"/>
</dbReference>
<dbReference type="GeneTree" id="ENSGT00940000163220"/>
<dbReference type="HOGENOM" id="CLU_013137_7_1_1"/>
<dbReference type="InParanoid" id="A6NLU0"/>
<dbReference type="OMA" id="QNCEERA"/>
<dbReference type="OrthoDB" id="128536at2759"/>
<dbReference type="PAN-GO" id="A6NLU0">
    <property type="GO annotations" value="4 GO annotations based on evolutionary models"/>
</dbReference>
<dbReference type="PhylomeDB" id="A6NLU0"/>
<dbReference type="TreeFam" id="TF317532"/>
<dbReference type="PathwayCommons" id="A6NLU0"/>
<dbReference type="SignaLink" id="A6NLU0"/>
<dbReference type="SIGNOR" id="A6NLU0"/>
<dbReference type="BioGRID-ORCS" id="342931">
    <property type="hits" value="63 hits in 1082 CRISPR screens"/>
</dbReference>
<dbReference type="EvolutionaryTrace" id="A6NLU0"/>
<dbReference type="GenomeRNAi" id="342931"/>
<dbReference type="Pharos" id="A6NLU0">
    <property type="development level" value="Tdark"/>
</dbReference>
<dbReference type="PRO" id="PR:A6NLU0"/>
<dbReference type="Proteomes" id="UP000005640">
    <property type="component" value="Chromosome 19"/>
</dbReference>
<dbReference type="RNAct" id="A6NLU0">
    <property type="molecule type" value="protein"/>
</dbReference>
<dbReference type="Bgee" id="ENSG00000223638">
    <property type="expression patterns" value="Expressed in primordial germ cell in gonad and 38 other cell types or tissues"/>
</dbReference>
<dbReference type="GO" id="GO:0005737">
    <property type="term" value="C:cytoplasm"/>
    <property type="evidence" value="ECO:0000318"/>
    <property type="project" value="GO_Central"/>
</dbReference>
<dbReference type="GO" id="GO:0005634">
    <property type="term" value="C:nucleus"/>
    <property type="evidence" value="ECO:0007669"/>
    <property type="project" value="UniProtKB-SubCell"/>
</dbReference>
<dbReference type="GO" id="GO:0061630">
    <property type="term" value="F:ubiquitin protein ligase activity"/>
    <property type="evidence" value="ECO:0000318"/>
    <property type="project" value="GO_Central"/>
</dbReference>
<dbReference type="GO" id="GO:0008270">
    <property type="term" value="F:zinc ion binding"/>
    <property type="evidence" value="ECO:0007669"/>
    <property type="project" value="UniProtKB-KW"/>
</dbReference>
<dbReference type="GO" id="GO:0045087">
    <property type="term" value="P:innate immune response"/>
    <property type="evidence" value="ECO:0000318"/>
    <property type="project" value="GO_Central"/>
</dbReference>
<dbReference type="GO" id="GO:0010468">
    <property type="term" value="P:regulation of gene expression"/>
    <property type="evidence" value="ECO:0000318"/>
    <property type="project" value="GO_Central"/>
</dbReference>
<dbReference type="CDD" id="cd15821">
    <property type="entry name" value="SPRY_PRY_RFPL"/>
    <property type="match status" value="1"/>
</dbReference>
<dbReference type="CDD" id="cd16621">
    <property type="entry name" value="vRING-HC-C4C4_RFPL"/>
    <property type="match status" value="1"/>
</dbReference>
<dbReference type="FunFam" id="2.60.120.920:FF:000040">
    <property type="entry name" value="Ret finger protein-like 4A"/>
    <property type="match status" value="1"/>
</dbReference>
<dbReference type="Gene3D" id="2.60.120.920">
    <property type="match status" value="1"/>
</dbReference>
<dbReference type="Gene3D" id="3.30.40.10">
    <property type="entry name" value="Zinc/RING finger domain, C3HC4 (zinc finger)"/>
    <property type="match status" value="1"/>
</dbReference>
<dbReference type="InterPro" id="IPR001870">
    <property type="entry name" value="B30.2/SPRY"/>
</dbReference>
<dbReference type="InterPro" id="IPR043136">
    <property type="entry name" value="B30.2/SPRY_sf"/>
</dbReference>
<dbReference type="InterPro" id="IPR003879">
    <property type="entry name" value="Butyrophylin_SPRY"/>
</dbReference>
<dbReference type="InterPro" id="IPR013320">
    <property type="entry name" value="ConA-like_dom_sf"/>
</dbReference>
<dbReference type="InterPro" id="IPR006574">
    <property type="entry name" value="PRY"/>
</dbReference>
<dbReference type="InterPro" id="IPR022723">
    <property type="entry name" value="RDM_domain_RFPL"/>
</dbReference>
<dbReference type="InterPro" id="IPR037960">
    <property type="entry name" value="SPRY/PRY_RFPL"/>
</dbReference>
<dbReference type="InterPro" id="IPR003877">
    <property type="entry name" value="SPRY_dom"/>
</dbReference>
<dbReference type="InterPro" id="IPR050143">
    <property type="entry name" value="TRIM/RBCC"/>
</dbReference>
<dbReference type="InterPro" id="IPR001841">
    <property type="entry name" value="Znf_RING"/>
</dbReference>
<dbReference type="InterPro" id="IPR013083">
    <property type="entry name" value="Znf_RING/FYVE/PHD"/>
</dbReference>
<dbReference type="PANTHER" id="PTHR24103">
    <property type="entry name" value="E3 UBIQUITIN-PROTEIN LIGASE TRIM"/>
    <property type="match status" value="1"/>
</dbReference>
<dbReference type="Pfam" id="PF13765">
    <property type="entry name" value="PRY"/>
    <property type="match status" value="1"/>
</dbReference>
<dbReference type="Pfam" id="PF11002">
    <property type="entry name" value="RDM"/>
    <property type="match status" value="1"/>
</dbReference>
<dbReference type="Pfam" id="PF00622">
    <property type="entry name" value="SPRY"/>
    <property type="match status" value="1"/>
</dbReference>
<dbReference type="Pfam" id="PF15227">
    <property type="entry name" value="zf-C3HC4_4"/>
    <property type="match status" value="1"/>
</dbReference>
<dbReference type="PRINTS" id="PR01407">
    <property type="entry name" value="BUTYPHLNCDUF"/>
</dbReference>
<dbReference type="SMART" id="SM00589">
    <property type="entry name" value="PRY"/>
    <property type="match status" value="1"/>
</dbReference>
<dbReference type="SMART" id="SM00449">
    <property type="entry name" value="SPRY"/>
    <property type="match status" value="1"/>
</dbReference>
<dbReference type="SUPFAM" id="SSF49899">
    <property type="entry name" value="Concanavalin A-like lectins/glucanases"/>
    <property type="match status" value="1"/>
</dbReference>
<dbReference type="SUPFAM" id="SSF57850">
    <property type="entry name" value="RING/U-box"/>
    <property type="match status" value="1"/>
</dbReference>
<dbReference type="PROSITE" id="PS50188">
    <property type="entry name" value="B302_SPRY"/>
    <property type="match status" value="1"/>
</dbReference>
<dbReference type="PROSITE" id="PS50089">
    <property type="entry name" value="ZF_RING_2"/>
    <property type="match status" value="1"/>
</dbReference>
<proteinExistence type="evidence at protein level"/>
<name>RFPLA_HUMAN</name>
<feature type="chain" id="PRO_0000300811" description="Ret finger protein-like 4A">
    <location>
        <begin position="1"/>
        <end position="287"/>
    </location>
</feature>
<feature type="domain" description="B30.2/SPRY" evidence="3">
    <location>
        <begin position="78"/>
        <end position="276"/>
    </location>
</feature>
<feature type="zinc finger region" description="RING-type; degenerate" evidence="2">
    <location>
        <begin position="11"/>
        <end position="53"/>
    </location>
</feature>
<feature type="turn" evidence="4">
    <location>
        <begin position="102"/>
        <end position="104"/>
    </location>
</feature>
<feature type="strand" evidence="4">
    <location>
        <begin position="109"/>
        <end position="111"/>
    </location>
</feature>
<feature type="strand" evidence="4">
    <location>
        <begin position="115"/>
        <end position="120"/>
    </location>
</feature>
<feature type="strand" evidence="4">
    <location>
        <begin position="135"/>
        <end position="137"/>
    </location>
</feature>
<feature type="strand" evidence="4">
    <location>
        <begin position="139"/>
        <end position="143"/>
    </location>
</feature>
<feature type="strand" evidence="4">
    <location>
        <begin position="146"/>
        <end position="156"/>
    </location>
</feature>
<feature type="strand" evidence="4">
    <location>
        <begin position="161"/>
        <end position="169"/>
    </location>
</feature>
<feature type="turn" evidence="4">
    <location>
        <begin position="182"/>
        <end position="185"/>
    </location>
</feature>
<feature type="strand" evidence="4">
    <location>
        <begin position="186"/>
        <end position="192"/>
    </location>
</feature>
<feature type="turn" evidence="4">
    <location>
        <begin position="193"/>
        <end position="195"/>
    </location>
</feature>
<feature type="strand" evidence="4">
    <location>
        <begin position="196"/>
        <end position="199"/>
    </location>
</feature>
<feature type="strand" evidence="4">
    <location>
        <begin position="201"/>
        <end position="203"/>
    </location>
</feature>
<feature type="strand" evidence="4">
    <location>
        <begin position="205"/>
        <end position="207"/>
    </location>
</feature>
<feature type="strand" evidence="4">
    <location>
        <begin position="215"/>
        <end position="221"/>
    </location>
</feature>
<feature type="turn" evidence="4">
    <location>
        <begin position="222"/>
        <end position="225"/>
    </location>
</feature>
<feature type="strand" evidence="4">
    <location>
        <begin position="226"/>
        <end position="231"/>
    </location>
</feature>
<feature type="turn" evidence="4">
    <location>
        <begin position="232"/>
        <end position="234"/>
    </location>
</feature>
<feature type="strand" evidence="4">
    <location>
        <begin position="237"/>
        <end position="241"/>
    </location>
</feature>
<feature type="strand" evidence="4">
    <location>
        <begin position="250"/>
        <end position="257"/>
    </location>
</feature>
<feature type="strand" evidence="4">
    <location>
        <begin position="259"/>
        <end position="262"/>
    </location>
</feature>
<feature type="strand" evidence="4">
    <location>
        <begin position="267"/>
        <end position="269"/>
    </location>
</feature>
<feature type="helix" evidence="4">
    <location>
        <begin position="275"/>
        <end position="278"/>
    </location>
</feature>
<keyword id="KW-0002">3D-structure</keyword>
<keyword id="KW-0963">Cytoplasm</keyword>
<keyword id="KW-0479">Metal-binding</keyword>
<keyword id="KW-0539">Nucleus</keyword>
<keyword id="KW-1267">Proteomics identification</keyword>
<keyword id="KW-1185">Reference proteome</keyword>
<keyword id="KW-0862">Zinc</keyword>
<keyword id="KW-0863">Zinc-finger</keyword>
<sequence length="287" mass="32238">MAEHFKQIIRCPVCLKDLEEAVQLKCGYACCLQCLNSLQKEPDGEGLLCRFCSVVSQKDDIKPKYKLRALVSIIKELEPKLKSVLTMNPRMRKFQVDMTFDVDTANNYLIISEDLRSFRSGDLSQNRKEQAERFDTALCVLGTPRFTSGRHYWEVDVGTSQVWDVGVCKESVNRQGKIVLSSEHGFLTVGCREGKVFAASTVPMTPLWVSPQLHRVGIFLDVGMRSIAFYNVSDGCHIYTFIEIPVCEPWRPFFAHKRGSQDDQSILSICSVINPSAASAPVSSEGK</sequence>
<comment type="subunit">
    <text evidence="1">Interacts with PSMB1, UBE2A and CCNB1.</text>
</comment>
<comment type="interaction">
    <interactant intactId="EBI-21545735">
        <id>A6NLU0</id>
    </interactant>
    <interactant intactId="EBI-745755">
        <id>Q8N5I3</id>
        <label>KCNRG</label>
    </interactant>
    <organismsDiffer>false</organismsDiffer>
    <experiments>3</experiments>
</comment>
<comment type="subcellular location">
    <subcellularLocation>
        <location evidence="1">Cytoplasm</location>
    </subcellularLocation>
    <subcellularLocation>
        <location evidence="1">Nucleus</location>
    </subcellularLocation>
</comment>
<reference key="1">
    <citation type="journal article" date="2004" name="Nature">
        <title>The DNA sequence and biology of human chromosome 19.</title>
        <authorList>
            <person name="Grimwood J."/>
            <person name="Gordon L.A."/>
            <person name="Olsen A.S."/>
            <person name="Terry A."/>
            <person name="Schmutz J."/>
            <person name="Lamerdin J.E."/>
            <person name="Hellsten U."/>
            <person name="Goodstein D."/>
            <person name="Couronne O."/>
            <person name="Tran-Gyamfi M."/>
            <person name="Aerts A."/>
            <person name="Altherr M."/>
            <person name="Ashworth L."/>
            <person name="Bajorek E."/>
            <person name="Black S."/>
            <person name="Branscomb E."/>
            <person name="Caenepeel S."/>
            <person name="Carrano A.V."/>
            <person name="Caoile C."/>
            <person name="Chan Y.M."/>
            <person name="Christensen M."/>
            <person name="Cleland C.A."/>
            <person name="Copeland A."/>
            <person name="Dalin E."/>
            <person name="Dehal P."/>
            <person name="Denys M."/>
            <person name="Detter J.C."/>
            <person name="Escobar J."/>
            <person name="Flowers D."/>
            <person name="Fotopulos D."/>
            <person name="Garcia C."/>
            <person name="Georgescu A.M."/>
            <person name="Glavina T."/>
            <person name="Gomez M."/>
            <person name="Gonzales E."/>
            <person name="Groza M."/>
            <person name="Hammon N."/>
            <person name="Hawkins T."/>
            <person name="Haydu L."/>
            <person name="Ho I."/>
            <person name="Huang W."/>
            <person name="Israni S."/>
            <person name="Jett J."/>
            <person name="Kadner K."/>
            <person name="Kimball H."/>
            <person name="Kobayashi A."/>
            <person name="Larionov V."/>
            <person name="Leem S.-H."/>
            <person name="Lopez F."/>
            <person name="Lou Y."/>
            <person name="Lowry S."/>
            <person name="Malfatti S."/>
            <person name="Martinez D."/>
            <person name="McCready P.M."/>
            <person name="Medina C."/>
            <person name="Morgan J."/>
            <person name="Nelson K."/>
            <person name="Nolan M."/>
            <person name="Ovcharenko I."/>
            <person name="Pitluck S."/>
            <person name="Pollard M."/>
            <person name="Popkie A.P."/>
            <person name="Predki P."/>
            <person name="Quan G."/>
            <person name="Ramirez L."/>
            <person name="Rash S."/>
            <person name="Retterer J."/>
            <person name="Rodriguez A."/>
            <person name="Rogers S."/>
            <person name="Salamov A."/>
            <person name="Salazar A."/>
            <person name="She X."/>
            <person name="Smith D."/>
            <person name="Slezak T."/>
            <person name="Solovyev V."/>
            <person name="Thayer N."/>
            <person name="Tice H."/>
            <person name="Tsai M."/>
            <person name="Ustaszewska A."/>
            <person name="Vo N."/>
            <person name="Wagner M."/>
            <person name="Wheeler J."/>
            <person name="Wu K."/>
            <person name="Xie G."/>
            <person name="Yang J."/>
            <person name="Dubchak I."/>
            <person name="Furey T.S."/>
            <person name="DeJong P."/>
            <person name="Dickson M."/>
            <person name="Gordon D."/>
            <person name="Eichler E.E."/>
            <person name="Pennacchio L.A."/>
            <person name="Richardson P."/>
            <person name="Stubbs L."/>
            <person name="Rokhsar D.S."/>
            <person name="Myers R.M."/>
            <person name="Rubin E.M."/>
            <person name="Lucas S.M."/>
        </authorList>
    </citation>
    <scope>NUCLEOTIDE SEQUENCE [LARGE SCALE GENOMIC DNA]</scope>
</reference>
<reference key="2">
    <citation type="journal article" date="2006" name="FEBS Lett.">
        <title>Structure of the PRYSPRY-domain: implications for autoinflammatory diseases.</title>
        <authorList>
            <person name="Gruetter C."/>
            <person name="Briand C."/>
            <person name="Capitani G."/>
            <person name="Mittl P.R.E."/>
            <person name="Papin S."/>
            <person name="Tschopp J."/>
            <person name="Gruetter M.G."/>
        </authorList>
    </citation>
    <scope>X-RAY CRYSTALLOGRAPHY (2.52 ANGSTROMS) OF 94-287</scope>
</reference>
<organism>
    <name type="scientific">Homo sapiens</name>
    <name type="common">Human</name>
    <dbReference type="NCBI Taxonomy" id="9606"/>
    <lineage>
        <taxon>Eukaryota</taxon>
        <taxon>Metazoa</taxon>
        <taxon>Chordata</taxon>
        <taxon>Craniata</taxon>
        <taxon>Vertebrata</taxon>
        <taxon>Euteleostomi</taxon>
        <taxon>Mammalia</taxon>
        <taxon>Eutheria</taxon>
        <taxon>Euarchontoglires</taxon>
        <taxon>Primates</taxon>
        <taxon>Haplorrhini</taxon>
        <taxon>Catarrhini</taxon>
        <taxon>Hominidae</taxon>
        <taxon>Homo</taxon>
    </lineage>
</organism>
<protein>
    <recommendedName>
        <fullName>Ret finger protein-like 4A</fullName>
    </recommendedName>
    <alternativeName>
        <fullName>RING finger protein 210</fullName>
    </alternativeName>
</protein>